<proteinExistence type="inferred from homology"/>
<organism>
    <name type="scientific">Bartonella quintana (strain Toulouse)</name>
    <name type="common">Rochalimaea quintana</name>
    <dbReference type="NCBI Taxonomy" id="283165"/>
    <lineage>
        <taxon>Bacteria</taxon>
        <taxon>Pseudomonadati</taxon>
        <taxon>Pseudomonadota</taxon>
        <taxon>Alphaproteobacteria</taxon>
        <taxon>Hyphomicrobiales</taxon>
        <taxon>Bartonellaceae</taxon>
        <taxon>Bartonella</taxon>
    </lineage>
</organism>
<sequence>MSNKVQMDNDFMQMQKPFALFAKWLEEATVSEINDPNAMALATVDETGLPNVRMVLLKDFSSRGFVFYTNYESCKGQEILKSMKASLVFHWKSLRRQIRIRGIVEKVSTQEADVYFQSRPRGSRIGAWASKQSQPLENRFVLEKAIAQYTARYAVGNIPRPPYWSGFRVKPLSIEFWCDRPFRLHDRLLFTRDSVEQVDWQRQKLYP</sequence>
<reference key="1">
    <citation type="journal article" date="2004" name="Proc. Natl. Acad. Sci. U.S.A.">
        <title>The louse-borne human pathogen Bartonella quintana is a genomic derivative of the zoonotic agent Bartonella henselae.</title>
        <authorList>
            <person name="Alsmark U.C.M."/>
            <person name="Frank A.C."/>
            <person name="Karlberg E.O."/>
            <person name="Legault B.-A."/>
            <person name="Ardell D.H."/>
            <person name="Canbaeck B."/>
            <person name="Eriksson A.-S."/>
            <person name="Naeslund A.K."/>
            <person name="Handley S.A."/>
            <person name="Huvet M."/>
            <person name="La Scola B."/>
            <person name="Holmberg M."/>
            <person name="Andersson S.G.E."/>
        </authorList>
    </citation>
    <scope>NUCLEOTIDE SEQUENCE [LARGE SCALE GENOMIC DNA]</scope>
    <source>
        <strain>Toulouse</strain>
    </source>
</reference>
<dbReference type="EC" id="1.4.3.5" evidence="1"/>
<dbReference type="EMBL" id="BX897700">
    <property type="protein sequence ID" value="CAF25848.1"/>
    <property type="molecule type" value="Genomic_DNA"/>
</dbReference>
<dbReference type="RefSeq" id="WP_011179142.1">
    <property type="nucleotide sequence ID" value="NC_005955.1"/>
</dbReference>
<dbReference type="SMR" id="Q6G0E0"/>
<dbReference type="GeneID" id="56533285"/>
<dbReference type="KEGG" id="bqu:BQ03480"/>
<dbReference type="eggNOG" id="COG0259">
    <property type="taxonomic scope" value="Bacteria"/>
</dbReference>
<dbReference type="HOGENOM" id="CLU_032263_2_3_5"/>
<dbReference type="OrthoDB" id="9780392at2"/>
<dbReference type="UniPathway" id="UPA01068">
    <property type="reaction ID" value="UER00304"/>
</dbReference>
<dbReference type="UniPathway" id="UPA01068">
    <property type="reaction ID" value="UER00305"/>
</dbReference>
<dbReference type="Proteomes" id="UP000000597">
    <property type="component" value="Chromosome"/>
</dbReference>
<dbReference type="GO" id="GO:0010181">
    <property type="term" value="F:FMN binding"/>
    <property type="evidence" value="ECO:0007669"/>
    <property type="project" value="UniProtKB-UniRule"/>
</dbReference>
<dbReference type="GO" id="GO:0004733">
    <property type="term" value="F:pyridoxamine phosphate oxidase activity"/>
    <property type="evidence" value="ECO:0007669"/>
    <property type="project" value="UniProtKB-UniRule"/>
</dbReference>
<dbReference type="GO" id="GO:0008615">
    <property type="term" value="P:pyridoxine biosynthetic process"/>
    <property type="evidence" value="ECO:0007669"/>
    <property type="project" value="UniProtKB-KW"/>
</dbReference>
<dbReference type="Gene3D" id="2.30.110.10">
    <property type="entry name" value="Electron Transport, Fmn-binding Protein, Chain A"/>
    <property type="match status" value="1"/>
</dbReference>
<dbReference type="HAMAP" id="MF_01629">
    <property type="entry name" value="PdxH"/>
    <property type="match status" value="1"/>
</dbReference>
<dbReference type="InterPro" id="IPR000659">
    <property type="entry name" value="Pyridox_Oxase"/>
</dbReference>
<dbReference type="InterPro" id="IPR019740">
    <property type="entry name" value="Pyridox_Oxase_CS"/>
</dbReference>
<dbReference type="InterPro" id="IPR011576">
    <property type="entry name" value="Pyridox_Oxase_N"/>
</dbReference>
<dbReference type="InterPro" id="IPR019576">
    <property type="entry name" value="Pyridoxamine_oxidase_dimer_C"/>
</dbReference>
<dbReference type="InterPro" id="IPR012349">
    <property type="entry name" value="Split_barrel_FMN-bd"/>
</dbReference>
<dbReference type="NCBIfam" id="TIGR00558">
    <property type="entry name" value="pdxH"/>
    <property type="match status" value="1"/>
</dbReference>
<dbReference type="NCBIfam" id="NF004231">
    <property type="entry name" value="PRK05679.1"/>
    <property type="match status" value="1"/>
</dbReference>
<dbReference type="PANTHER" id="PTHR10851:SF0">
    <property type="entry name" value="PYRIDOXINE-5'-PHOSPHATE OXIDASE"/>
    <property type="match status" value="1"/>
</dbReference>
<dbReference type="PANTHER" id="PTHR10851">
    <property type="entry name" value="PYRIDOXINE-5-PHOSPHATE OXIDASE"/>
    <property type="match status" value="1"/>
</dbReference>
<dbReference type="Pfam" id="PF10590">
    <property type="entry name" value="PNP_phzG_C"/>
    <property type="match status" value="1"/>
</dbReference>
<dbReference type="Pfam" id="PF01243">
    <property type="entry name" value="PNPOx_N"/>
    <property type="match status" value="1"/>
</dbReference>
<dbReference type="PIRSF" id="PIRSF000190">
    <property type="entry name" value="Pyd_amn-ph_oxd"/>
    <property type="match status" value="1"/>
</dbReference>
<dbReference type="SUPFAM" id="SSF50475">
    <property type="entry name" value="FMN-binding split barrel"/>
    <property type="match status" value="1"/>
</dbReference>
<dbReference type="PROSITE" id="PS01064">
    <property type="entry name" value="PYRIDOX_OXIDASE"/>
    <property type="match status" value="1"/>
</dbReference>
<comment type="function">
    <text evidence="1">Catalyzes the oxidation of either pyridoxine 5'-phosphate (PNP) or pyridoxamine 5'-phosphate (PMP) into pyridoxal 5'-phosphate (PLP).</text>
</comment>
<comment type="catalytic activity">
    <reaction evidence="1">
        <text>pyridoxamine 5'-phosphate + O2 + H2O = pyridoxal 5'-phosphate + H2O2 + NH4(+)</text>
        <dbReference type="Rhea" id="RHEA:15817"/>
        <dbReference type="ChEBI" id="CHEBI:15377"/>
        <dbReference type="ChEBI" id="CHEBI:15379"/>
        <dbReference type="ChEBI" id="CHEBI:16240"/>
        <dbReference type="ChEBI" id="CHEBI:28938"/>
        <dbReference type="ChEBI" id="CHEBI:58451"/>
        <dbReference type="ChEBI" id="CHEBI:597326"/>
        <dbReference type="EC" id="1.4.3.5"/>
    </reaction>
</comment>
<comment type="catalytic activity">
    <reaction evidence="1">
        <text>pyridoxine 5'-phosphate + O2 = pyridoxal 5'-phosphate + H2O2</text>
        <dbReference type="Rhea" id="RHEA:15149"/>
        <dbReference type="ChEBI" id="CHEBI:15379"/>
        <dbReference type="ChEBI" id="CHEBI:16240"/>
        <dbReference type="ChEBI" id="CHEBI:58589"/>
        <dbReference type="ChEBI" id="CHEBI:597326"/>
        <dbReference type="EC" id="1.4.3.5"/>
    </reaction>
</comment>
<comment type="cofactor">
    <cofactor evidence="1">
        <name>FMN</name>
        <dbReference type="ChEBI" id="CHEBI:58210"/>
    </cofactor>
    <text evidence="1">Binds 1 FMN per subunit.</text>
</comment>
<comment type="pathway">
    <text evidence="1">Cofactor metabolism; pyridoxal 5'-phosphate salvage; pyridoxal 5'-phosphate from pyridoxamine 5'-phosphate: step 1/1.</text>
</comment>
<comment type="pathway">
    <text evidence="1">Cofactor metabolism; pyridoxal 5'-phosphate salvage; pyridoxal 5'-phosphate from pyridoxine 5'-phosphate: step 1/1.</text>
</comment>
<comment type="subunit">
    <text evidence="1">Homodimer.</text>
</comment>
<comment type="similarity">
    <text evidence="1">Belongs to the pyridoxamine 5'-phosphate oxidase family.</text>
</comment>
<feature type="chain" id="PRO_0000167685" description="Pyridoxine/pyridoxamine 5'-phosphate oxidase">
    <location>
        <begin position="1"/>
        <end position="207"/>
    </location>
</feature>
<feature type="binding site" evidence="1">
    <location>
        <begin position="53"/>
        <end position="58"/>
    </location>
    <ligand>
        <name>FMN</name>
        <dbReference type="ChEBI" id="CHEBI:58210"/>
    </ligand>
</feature>
<feature type="binding site" evidence="1">
    <location>
        <position position="58"/>
    </location>
    <ligand>
        <name>substrate</name>
    </ligand>
</feature>
<feature type="binding site" evidence="1">
    <location>
        <begin position="68"/>
        <end position="69"/>
    </location>
    <ligand>
        <name>FMN</name>
        <dbReference type="ChEBI" id="CHEBI:58210"/>
    </ligand>
</feature>
<feature type="binding site" evidence="1">
    <location>
        <position position="75"/>
    </location>
    <ligand>
        <name>FMN</name>
        <dbReference type="ChEBI" id="CHEBI:58210"/>
    </ligand>
</feature>
<feature type="binding site" evidence="1">
    <location>
        <position position="97"/>
    </location>
    <ligand>
        <name>FMN</name>
        <dbReference type="ChEBI" id="CHEBI:58210"/>
    </ligand>
</feature>
<feature type="binding site" evidence="1">
    <location>
        <position position="115"/>
    </location>
    <ligand>
        <name>substrate</name>
    </ligand>
</feature>
<feature type="binding site" evidence="1">
    <location>
        <position position="119"/>
    </location>
    <ligand>
        <name>substrate</name>
    </ligand>
</feature>
<feature type="binding site" evidence="1">
    <location>
        <position position="123"/>
    </location>
    <ligand>
        <name>substrate</name>
    </ligand>
</feature>
<feature type="binding site" evidence="1">
    <location>
        <begin position="132"/>
        <end position="133"/>
    </location>
    <ligand>
        <name>FMN</name>
        <dbReference type="ChEBI" id="CHEBI:58210"/>
    </ligand>
</feature>
<feature type="binding site" evidence="1">
    <location>
        <position position="177"/>
    </location>
    <ligand>
        <name>FMN</name>
        <dbReference type="ChEBI" id="CHEBI:58210"/>
    </ligand>
</feature>
<feature type="binding site" evidence="1">
    <location>
        <begin position="183"/>
        <end position="185"/>
    </location>
    <ligand>
        <name>substrate</name>
    </ligand>
</feature>
<feature type="binding site" evidence="1">
    <location>
        <position position="187"/>
    </location>
    <ligand>
        <name>FMN</name>
        <dbReference type="ChEBI" id="CHEBI:58210"/>
    </ligand>
</feature>
<name>PDXH_BARQU</name>
<evidence type="ECO:0000255" key="1">
    <source>
        <dbReference type="HAMAP-Rule" id="MF_01629"/>
    </source>
</evidence>
<protein>
    <recommendedName>
        <fullName evidence="1">Pyridoxine/pyridoxamine 5'-phosphate oxidase</fullName>
        <ecNumber evidence="1">1.4.3.5</ecNumber>
    </recommendedName>
    <alternativeName>
        <fullName evidence="1">PNP/PMP oxidase</fullName>
        <shortName evidence="1">PNPOx</shortName>
    </alternativeName>
    <alternativeName>
        <fullName evidence="1">Pyridoxal 5'-phosphate synthase</fullName>
    </alternativeName>
</protein>
<gene>
    <name evidence="1" type="primary">pdxH</name>
    <name type="ordered locus">BQ03480</name>
</gene>
<keyword id="KW-0285">Flavoprotein</keyword>
<keyword id="KW-0288">FMN</keyword>
<keyword id="KW-0560">Oxidoreductase</keyword>
<keyword id="KW-0664">Pyridoxine biosynthesis</keyword>
<accession>Q6G0E0</accession>